<dbReference type="EMBL" id="CP000946">
    <property type="protein sequence ID" value="ACA77493.1"/>
    <property type="molecule type" value="Genomic_DNA"/>
</dbReference>
<dbReference type="RefSeq" id="WP_000460707.1">
    <property type="nucleotide sequence ID" value="NZ_MTFT01000006.1"/>
</dbReference>
<dbReference type="KEGG" id="ecl:EcolC_1844"/>
<dbReference type="HOGENOM" id="CLU_125889_0_0_6"/>
<dbReference type="GO" id="GO:0005886">
    <property type="term" value="C:plasma membrane"/>
    <property type="evidence" value="ECO:0007669"/>
    <property type="project" value="UniProtKB-SubCell"/>
</dbReference>
<dbReference type="HAMAP" id="MF_01874">
    <property type="entry name" value="UPF0756"/>
    <property type="match status" value="1"/>
</dbReference>
<dbReference type="InterPro" id="IPR007382">
    <property type="entry name" value="UPF0756_TM"/>
</dbReference>
<dbReference type="PANTHER" id="PTHR38452">
    <property type="entry name" value="UPF0756 MEMBRANE PROTEIN YEAL"/>
    <property type="match status" value="1"/>
</dbReference>
<dbReference type="PANTHER" id="PTHR38452:SF1">
    <property type="entry name" value="UPF0756 MEMBRANE PROTEIN YEAL"/>
    <property type="match status" value="1"/>
</dbReference>
<dbReference type="Pfam" id="PF04284">
    <property type="entry name" value="DUF441"/>
    <property type="match status" value="1"/>
</dbReference>
<gene>
    <name evidence="1" type="primary">yeaL</name>
    <name type="ordered locus">EcolC_1844</name>
</gene>
<organism>
    <name type="scientific">Escherichia coli (strain ATCC 8739 / DSM 1576 / NBRC 3972 / NCIMB 8545 / WDCM 00012 / Crooks)</name>
    <dbReference type="NCBI Taxonomy" id="481805"/>
    <lineage>
        <taxon>Bacteria</taxon>
        <taxon>Pseudomonadati</taxon>
        <taxon>Pseudomonadota</taxon>
        <taxon>Gammaproteobacteria</taxon>
        <taxon>Enterobacterales</taxon>
        <taxon>Enterobacteriaceae</taxon>
        <taxon>Escherichia</taxon>
    </lineage>
</organism>
<keyword id="KW-1003">Cell membrane</keyword>
<keyword id="KW-0472">Membrane</keyword>
<keyword id="KW-0812">Transmembrane</keyword>
<keyword id="KW-1133">Transmembrane helix</keyword>
<accession>B1IPE3</accession>
<reference key="1">
    <citation type="submission" date="2008-02" db="EMBL/GenBank/DDBJ databases">
        <title>Complete sequence of Escherichia coli C str. ATCC 8739.</title>
        <authorList>
            <person name="Copeland A."/>
            <person name="Lucas S."/>
            <person name="Lapidus A."/>
            <person name="Glavina del Rio T."/>
            <person name="Dalin E."/>
            <person name="Tice H."/>
            <person name="Bruce D."/>
            <person name="Goodwin L."/>
            <person name="Pitluck S."/>
            <person name="Kiss H."/>
            <person name="Brettin T."/>
            <person name="Detter J.C."/>
            <person name="Han C."/>
            <person name="Kuske C.R."/>
            <person name="Schmutz J."/>
            <person name="Larimer F."/>
            <person name="Land M."/>
            <person name="Hauser L."/>
            <person name="Kyrpides N."/>
            <person name="Mikhailova N."/>
            <person name="Ingram L."/>
            <person name="Richardson P."/>
        </authorList>
    </citation>
    <scope>NUCLEOTIDE SEQUENCE [LARGE SCALE GENOMIC DNA]</scope>
    <source>
        <strain>ATCC 8739 / DSM 1576 / NBRC 3972 / NCIMB 8545 / WDCM 00012 / Crooks</strain>
    </source>
</reference>
<feature type="chain" id="PRO_0000388854" description="UPF0756 membrane protein YeaL">
    <location>
        <begin position="1"/>
        <end position="148"/>
    </location>
</feature>
<feature type="transmembrane region" description="Helical" evidence="1">
    <location>
        <begin position="14"/>
        <end position="34"/>
    </location>
</feature>
<feature type="transmembrane region" description="Helical" evidence="1">
    <location>
        <begin position="51"/>
        <end position="71"/>
    </location>
</feature>
<feature type="transmembrane region" description="Helical" evidence="1">
    <location>
        <begin position="86"/>
        <end position="106"/>
    </location>
</feature>
<feature type="transmembrane region" description="Helical" evidence="1">
    <location>
        <begin position="121"/>
        <end position="141"/>
    </location>
</feature>
<evidence type="ECO:0000255" key="1">
    <source>
        <dbReference type="HAMAP-Rule" id="MF_01874"/>
    </source>
</evidence>
<comment type="subcellular location">
    <subcellularLocation>
        <location evidence="1">Cell membrane</location>
        <topology evidence="1">Multi-pass membrane protein</topology>
    </subcellularLocation>
</comment>
<comment type="similarity">
    <text evidence="1">Belongs to the UPF0756 family.</text>
</comment>
<sequence length="148" mass="15256">MFDVTLLILLGLAALGFISHNTTVAVSILVLIIVRVTPLSTFFPWIEKQGLSIGIIILTIGVMAPIASGTLPPSTLIHSFLNWKSLVAIAVGVIVSWLGGRGVTLMGSQPQLVAGLLVGTVLGVALFRGVPVGPLIAAGLVSLIVGKQ</sequence>
<proteinExistence type="inferred from homology"/>
<protein>
    <recommendedName>
        <fullName evidence="1">UPF0756 membrane protein YeaL</fullName>
    </recommendedName>
</protein>
<name>YEAL_ECOLC</name>